<keyword id="KW-0687">Ribonucleoprotein</keyword>
<keyword id="KW-0689">Ribosomal protein</keyword>
<keyword id="KW-0694">RNA-binding</keyword>
<keyword id="KW-0699">rRNA-binding</keyword>
<dbReference type="EMBL" id="CP000083">
    <property type="protein sequence ID" value="AAZ26147.1"/>
    <property type="molecule type" value="Genomic_DNA"/>
</dbReference>
<dbReference type="RefSeq" id="WP_011044318.1">
    <property type="nucleotide sequence ID" value="NC_003910.7"/>
</dbReference>
<dbReference type="SMR" id="Q47Y88"/>
<dbReference type="STRING" id="167879.CPS_3558"/>
<dbReference type="KEGG" id="cps:CPS_3558"/>
<dbReference type="eggNOG" id="COG1825">
    <property type="taxonomic scope" value="Bacteria"/>
</dbReference>
<dbReference type="HOGENOM" id="CLU_075939_0_1_6"/>
<dbReference type="Proteomes" id="UP000000547">
    <property type="component" value="Chromosome"/>
</dbReference>
<dbReference type="GO" id="GO:0022625">
    <property type="term" value="C:cytosolic large ribosomal subunit"/>
    <property type="evidence" value="ECO:0007669"/>
    <property type="project" value="TreeGrafter"/>
</dbReference>
<dbReference type="GO" id="GO:0008097">
    <property type="term" value="F:5S rRNA binding"/>
    <property type="evidence" value="ECO:0007669"/>
    <property type="project" value="InterPro"/>
</dbReference>
<dbReference type="GO" id="GO:0003735">
    <property type="term" value="F:structural constituent of ribosome"/>
    <property type="evidence" value="ECO:0007669"/>
    <property type="project" value="InterPro"/>
</dbReference>
<dbReference type="GO" id="GO:0006412">
    <property type="term" value="P:translation"/>
    <property type="evidence" value="ECO:0007669"/>
    <property type="project" value="UniProtKB-UniRule"/>
</dbReference>
<dbReference type="CDD" id="cd00495">
    <property type="entry name" value="Ribosomal_L25_TL5_CTC"/>
    <property type="match status" value="1"/>
</dbReference>
<dbReference type="FunFam" id="2.40.240.10:FF:000002">
    <property type="entry name" value="50S ribosomal protein L25"/>
    <property type="match status" value="1"/>
</dbReference>
<dbReference type="Gene3D" id="2.170.120.20">
    <property type="entry name" value="Ribosomal protein L25, beta domain"/>
    <property type="match status" value="1"/>
</dbReference>
<dbReference type="Gene3D" id="2.40.240.10">
    <property type="entry name" value="Ribosomal Protein L25, Chain P"/>
    <property type="match status" value="1"/>
</dbReference>
<dbReference type="HAMAP" id="MF_01336">
    <property type="entry name" value="Ribosomal_bL25"/>
    <property type="match status" value="1"/>
</dbReference>
<dbReference type="HAMAP" id="MF_01334">
    <property type="entry name" value="Ribosomal_bL25_CTC"/>
    <property type="match status" value="1"/>
</dbReference>
<dbReference type="InterPro" id="IPR020056">
    <property type="entry name" value="Rbsml_bL25/Gln-tRNA_synth_N"/>
</dbReference>
<dbReference type="InterPro" id="IPR011035">
    <property type="entry name" value="Ribosomal_bL25/Gln-tRNA_synth"/>
</dbReference>
<dbReference type="InterPro" id="IPR020057">
    <property type="entry name" value="Ribosomal_bL25_b-dom"/>
</dbReference>
<dbReference type="InterPro" id="IPR037121">
    <property type="entry name" value="Ribosomal_bL25_C"/>
</dbReference>
<dbReference type="InterPro" id="IPR001021">
    <property type="entry name" value="Ribosomal_bL25_long"/>
</dbReference>
<dbReference type="InterPro" id="IPR020055">
    <property type="entry name" value="Ribosomal_bL25_short"/>
</dbReference>
<dbReference type="InterPro" id="IPR029751">
    <property type="entry name" value="Ribosomal_L25_dom"/>
</dbReference>
<dbReference type="InterPro" id="IPR020930">
    <property type="entry name" value="Ribosomal_uL5_bac-type"/>
</dbReference>
<dbReference type="NCBIfam" id="TIGR00731">
    <property type="entry name" value="bL25_bact_ctc"/>
    <property type="match status" value="1"/>
</dbReference>
<dbReference type="NCBIfam" id="NF004128">
    <property type="entry name" value="PRK05618.1-2"/>
    <property type="match status" value="1"/>
</dbReference>
<dbReference type="NCBIfam" id="NF004130">
    <property type="entry name" value="PRK05618.1-5"/>
    <property type="match status" value="1"/>
</dbReference>
<dbReference type="NCBIfam" id="NF004612">
    <property type="entry name" value="PRK05943.1"/>
    <property type="match status" value="1"/>
</dbReference>
<dbReference type="PANTHER" id="PTHR33284">
    <property type="entry name" value="RIBOSOMAL PROTEIN L25/GLN-TRNA SYNTHETASE, ANTI-CODON-BINDING DOMAIN-CONTAINING PROTEIN"/>
    <property type="match status" value="1"/>
</dbReference>
<dbReference type="PANTHER" id="PTHR33284:SF1">
    <property type="entry name" value="RIBOSOMAL PROTEIN L25_GLN-TRNA SYNTHETASE, ANTI-CODON-BINDING DOMAIN-CONTAINING PROTEIN"/>
    <property type="match status" value="1"/>
</dbReference>
<dbReference type="Pfam" id="PF01386">
    <property type="entry name" value="Ribosomal_L25p"/>
    <property type="match status" value="1"/>
</dbReference>
<dbReference type="Pfam" id="PF14693">
    <property type="entry name" value="Ribosomal_TL5_C"/>
    <property type="match status" value="1"/>
</dbReference>
<dbReference type="SUPFAM" id="SSF50715">
    <property type="entry name" value="Ribosomal protein L25-like"/>
    <property type="match status" value="1"/>
</dbReference>
<proteinExistence type="inferred from homology"/>
<comment type="function">
    <text evidence="1">This is one of the proteins that binds to the 5S RNA in the ribosome where it forms part of the central protuberance.</text>
</comment>
<comment type="subunit">
    <text evidence="1">Part of the 50S ribosomal subunit; part of the 5S rRNA/L5/L18/L25 subcomplex. Contacts the 5S rRNA. Binds to the 5S rRNA independently of L5 and L18.</text>
</comment>
<comment type="similarity">
    <text evidence="1">Belongs to the bacterial ribosomal protein bL25 family. CTC subfamily.</text>
</comment>
<name>RL25_COLP3</name>
<accession>Q47Y88</accession>
<sequence length="211" mass="22981">MTDLLTLEAEVRTDLGKGASRRLRHANKVPAILYGENEEPISLTLEHKNVFRAQQEEAFYSQVLTLNIAGKPVECLIKDMQRHPFKQVVMHLDFLRIDAKHAVHANAPIHFLNEDEAAKTGANISHHMNEIAITCLPKDLPEFISIDLAGLELGQTIHLSDVTFPAGVTSDELAKGEDHDLAVVSANAPKAAKVSTDDEAAAPAEEAPAAE</sequence>
<organism>
    <name type="scientific">Colwellia psychrerythraea (strain 34H / ATCC BAA-681)</name>
    <name type="common">Vibrio psychroerythus</name>
    <dbReference type="NCBI Taxonomy" id="167879"/>
    <lineage>
        <taxon>Bacteria</taxon>
        <taxon>Pseudomonadati</taxon>
        <taxon>Pseudomonadota</taxon>
        <taxon>Gammaproteobacteria</taxon>
        <taxon>Alteromonadales</taxon>
        <taxon>Colwelliaceae</taxon>
        <taxon>Colwellia</taxon>
    </lineage>
</organism>
<gene>
    <name evidence="1" type="primary">rplY</name>
    <name evidence="1" type="synonym">ctc</name>
    <name type="ordered locus">CPS_3558</name>
</gene>
<evidence type="ECO:0000255" key="1">
    <source>
        <dbReference type="HAMAP-Rule" id="MF_01334"/>
    </source>
</evidence>
<evidence type="ECO:0000256" key="2">
    <source>
        <dbReference type="SAM" id="MobiDB-lite"/>
    </source>
</evidence>
<evidence type="ECO:0000305" key="3"/>
<protein>
    <recommendedName>
        <fullName evidence="1">Large ribosomal subunit protein bL25</fullName>
    </recommendedName>
    <alternativeName>
        <fullName evidence="3">50S ribosomal protein L25</fullName>
    </alternativeName>
    <alternativeName>
        <fullName evidence="1">General stress protein CTC</fullName>
    </alternativeName>
</protein>
<feature type="chain" id="PRO_0000244203" description="Large ribosomal subunit protein bL25">
    <location>
        <begin position="1"/>
        <end position="211"/>
    </location>
</feature>
<feature type="region of interest" description="Disordered" evidence="2">
    <location>
        <begin position="188"/>
        <end position="211"/>
    </location>
</feature>
<feature type="compositionally biased region" description="Low complexity" evidence="2">
    <location>
        <begin position="201"/>
        <end position="211"/>
    </location>
</feature>
<reference key="1">
    <citation type="journal article" date="2005" name="Proc. Natl. Acad. Sci. U.S.A.">
        <title>The psychrophilic lifestyle as revealed by the genome sequence of Colwellia psychrerythraea 34H through genomic and proteomic analyses.</title>
        <authorList>
            <person name="Methe B.A."/>
            <person name="Nelson K.E."/>
            <person name="Deming J.W."/>
            <person name="Momen B."/>
            <person name="Melamud E."/>
            <person name="Zhang X."/>
            <person name="Moult J."/>
            <person name="Madupu R."/>
            <person name="Nelson W.C."/>
            <person name="Dodson R.J."/>
            <person name="Brinkac L.M."/>
            <person name="Daugherty S.C."/>
            <person name="Durkin A.S."/>
            <person name="DeBoy R.T."/>
            <person name="Kolonay J.F."/>
            <person name="Sullivan S.A."/>
            <person name="Zhou L."/>
            <person name="Davidsen T.M."/>
            <person name="Wu M."/>
            <person name="Huston A.L."/>
            <person name="Lewis M."/>
            <person name="Weaver B."/>
            <person name="Weidman J.F."/>
            <person name="Khouri H."/>
            <person name="Utterback T.R."/>
            <person name="Feldblyum T.V."/>
            <person name="Fraser C.M."/>
        </authorList>
    </citation>
    <scope>NUCLEOTIDE SEQUENCE [LARGE SCALE GENOMIC DNA]</scope>
    <source>
        <strain>34H / ATCC BAA-681</strain>
    </source>
</reference>